<keyword id="KW-0004">4Fe-4S</keyword>
<keyword id="KW-0963">Cytoplasm</keyword>
<keyword id="KW-0408">Iron</keyword>
<keyword id="KW-0411">Iron-sulfur</keyword>
<keyword id="KW-0479">Metal-binding</keyword>
<keyword id="KW-0949">S-adenosyl-L-methionine</keyword>
<keyword id="KW-0808">Transferase</keyword>
<keyword id="KW-0819">tRNA processing</keyword>
<reference key="1">
    <citation type="submission" date="2006-08" db="EMBL/GenBank/DDBJ databases">
        <title>Complete sequence of Shewanella sp. MR-4.</title>
        <authorList>
            <consortium name="US DOE Joint Genome Institute"/>
            <person name="Copeland A."/>
            <person name="Lucas S."/>
            <person name="Lapidus A."/>
            <person name="Barry K."/>
            <person name="Detter J.C."/>
            <person name="Glavina del Rio T."/>
            <person name="Hammon N."/>
            <person name="Israni S."/>
            <person name="Dalin E."/>
            <person name="Tice H."/>
            <person name="Pitluck S."/>
            <person name="Kiss H."/>
            <person name="Brettin T."/>
            <person name="Bruce D."/>
            <person name="Han C."/>
            <person name="Tapia R."/>
            <person name="Gilna P."/>
            <person name="Schmutz J."/>
            <person name="Larimer F."/>
            <person name="Land M."/>
            <person name="Hauser L."/>
            <person name="Kyrpides N."/>
            <person name="Mikhailova N."/>
            <person name="Nealson K."/>
            <person name="Konstantinidis K."/>
            <person name="Klappenbach J."/>
            <person name="Tiedje J."/>
            <person name="Richardson P."/>
        </authorList>
    </citation>
    <scope>NUCLEOTIDE SEQUENCE [LARGE SCALE GENOMIC DNA]</scope>
    <source>
        <strain>MR-4</strain>
    </source>
</reference>
<accession>Q0HLI3</accession>
<gene>
    <name evidence="1" type="primary">miaB</name>
    <name type="ordered locus">Shewmr4_1004</name>
</gene>
<organism>
    <name type="scientific">Shewanella sp. (strain MR-4)</name>
    <dbReference type="NCBI Taxonomy" id="60480"/>
    <lineage>
        <taxon>Bacteria</taxon>
        <taxon>Pseudomonadati</taxon>
        <taxon>Pseudomonadota</taxon>
        <taxon>Gammaproteobacteria</taxon>
        <taxon>Alteromonadales</taxon>
        <taxon>Shewanellaceae</taxon>
        <taxon>Shewanella</taxon>
    </lineage>
</organism>
<comment type="function">
    <text evidence="1">Catalyzes the methylthiolation of N6-(dimethylallyl)adenosine (i(6)A), leading to the formation of 2-methylthio-N6-(dimethylallyl)adenosine (ms(2)i(6)A) at position 37 in tRNAs that read codons beginning with uridine.</text>
</comment>
<comment type="catalytic activity">
    <reaction evidence="1">
        <text>N(6)-dimethylallyladenosine(37) in tRNA + (sulfur carrier)-SH + AH2 + 2 S-adenosyl-L-methionine = 2-methylsulfanyl-N(6)-dimethylallyladenosine(37) in tRNA + (sulfur carrier)-H + 5'-deoxyadenosine + L-methionine + A + S-adenosyl-L-homocysteine + 2 H(+)</text>
        <dbReference type="Rhea" id="RHEA:37067"/>
        <dbReference type="Rhea" id="RHEA-COMP:10375"/>
        <dbReference type="Rhea" id="RHEA-COMP:10376"/>
        <dbReference type="Rhea" id="RHEA-COMP:14737"/>
        <dbReference type="Rhea" id="RHEA-COMP:14739"/>
        <dbReference type="ChEBI" id="CHEBI:13193"/>
        <dbReference type="ChEBI" id="CHEBI:15378"/>
        <dbReference type="ChEBI" id="CHEBI:17319"/>
        <dbReference type="ChEBI" id="CHEBI:17499"/>
        <dbReference type="ChEBI" id="CHEBI:29917"/>
        <dbReference type="ChEBI" id="CHEBI:57844"/>
        <dbReference type="ChEBI" id="CHEBI:57856"/>
        <dbReference type="ChEBI" id="CHEBI:59789"/>
        <dbReference type="ChEBI" id="CHEBI:64428"/>
        <dbReference type="ChEBI" id="CHEBI:74415"/>
        <dbReference type="ChEBI" id="CHEBI:74417"/>
        <dbReference type="EC" id="2.8.4.3"/>
    </reaction>
</comment>
<comment type="cofactor">
    <cofactor evidence="1">
        <name>[4Fe-4S] cluster</name>
        <dbReference type="ChEBI" id="CHEBI:49883"/>
    </cofactor>
    <text evidence="1">Binds 2 [4Fe-4S] clusters. One cluster is coordinated with 3 cysteines and an exchangeable S-adenosyl-L-methionine.</text>
</comment>
<comment type="subunit">
    <text evidence="1">Monomer.</text>
</comment>
<comment type="subcellular location">
    <subcellularLocation>
        <location evidence="1">Cytoplasm</location>
    </subcellularLocation>
</comment>
<comment type="similarity">
    <text evidence="1">Belongs to the methylthiotransferase family. MiaB subfamily.</text>
</comment>
<feature type="chain" id="PRO_0000374546" description="tRNA-2-methylthio-N(6)-dimethylallyladenosine synthase">
    <location>
        <begin position="1"/>
        <end position="474"/>
    </location>
</feature>
<feature type="domain" description="MTTase N-terminal" evidence="1">
    <location>
        <begin position="3"/>
        <end position="120"/>
    </location>
</feature>
<feature type="domain" description="Radical SAM core" evidence="2">
    <location>
        <begin position="143"/>
        <end position="375"/>
    </location>
</feature>
<feature type="domain" description="TRAM" evidence="1">
    <location>
        <begin position="378"/>
        <end position="441"/>
    </location>
</feature>
<feature type="binding site" evidence="1">
    <location>
        <position position="12"/>
    </location>
    <ligand>
        <name>[4Fe-4S] cluster</name>
        <dbReference type="ChEBI" id="CHEBI:49883"/>
        <label>1</label>
    </ligand>
</feature>
<feature type="binding site" evidence="1">
    <location>
        <position position="49"/>
    </location>
    <ligand>
        <name>[4Fe-4S] cluster</name>
        <dbReference type="ChEBI" id="CHEBI:49883"/>
        <label>1</label>
    </ligand>
</feature>
<feature type="binding site" evidence="1">
    <location>
        <position position="83"/>
    </location>
    <ligand>
        <name>[4Fe-4S] cluster</name>
        <dbReference type="ChEBI" id="CHEBI:49883"/>
        <label>1</label>
    </ligand>
</feature>
<feature type="binding site" evidence="1">
    <location>
        <position position="157"/>
    </location>
    <ligand>
        <name>[4Fe-4S] cluster</name>
        <dbReference type="ChEBI" id="CHEBI:49883"/>
        <label>2</label>
        <note>4Fe-4S-S-AdoMet</note>
    </ligand>
</feature>
<feature type="binding site" evidence="1">
    <location>
        <position position="161"/>
    </location>
    <ligand>
        <name>[4Fe-4S] cluster</name>
        <dbReference type="ChEBI" id="CHEBI:49883"/>
        <label>2</label>
        <note>4Fe-4S-S-AdoMet</note>
    </ligand>
</feature>
<feature type="binding site" evidence="1">
    <location>
        <position position="164"/>
    </location>
    <ligand>
        <name>[4Fe-4S] cluster</name>
        <dbReference type="ChEBI" id="CHEBI:49883"/>
        <label>2</label>
        <note>4Fe-4S-S-AdoMet</note>
    </ligand>
</feature>
<proteinExistence type="inferred from homology"/>
<sequence length="474" mass="53741">MSKKLHIKTWGCQMNEYDSSKMADLLGEYQGYTLTEEAEEADILLLNTCSIREKAQEKVFHQLGRWKTLKDKNPDLIIGVGGCVASQEGKAIKDRAHCVDIIFGPQTLHRLPDMIEQVRRGEKAVIDVSFPEIEKFDRLPEPRAEGPTAFVSIMEGCSKYCSFCVVPYTRGEEVSRPSDDIILEIAQLAEQGVREVNLLGQNVNAYRGATHDGGICTFAELLRYVAAIDGIDRIRFTTSHPIEFTQDIIDVYEDTPELVSFLHLPVQSGSDRILTAMKRGHMAIEYKSIIRRLRKARPDIQISSDFIIGFPGETKEDFADTMKLIEDVAFDHSFSFIYSARPGTPAADLPDDVDMEEKKQRLAILQDRITQQAMRYSRHMMGTVQRILVEGPSVKNPMELRGRTENNRVVNFEGLPKHIGSFVDVEIVDVYTNSLRGKFIRGEDEMDLRRNLRPSDILAKHKQDDDLGVTQFKP</sequence>
<evidence type="ECO:0000255" key="1">
    <source>
        <dbReference type="HAMAP-Rule" id="MF_01864"/>
    </source>
</evidence>
<evidence type="ECO:0000255" key="2">
    <source>
        <dbReference type="PROSITE-ProRule" id="PRU01266"/>
    </source>
</evidence>
<name>MIAB_SHESM</name>
<dbReference type="EC" id="2.8.4.3" evidence="1"/>
<dbReference type="EMBL" id="CP000446">
    <property type="protein sequence ID" value="ABI38084.1"/>
    <property type="molecule type" value="Genomic_DNA"/>
</dbReference>
<dbReference type="RefSeq" id="WP_011621796.1">
    <property type="nucleotide sequence ID" value="NC_008321.1"/>
</dbReference>
<dbReference type="SMR" id="Q0HLI3"/>
<dbReference type="KEGG" id="she:Shewmr4_1004"/>
<dbReference type="HOGENOM" id="CLU_018697_2_0_6"/>
<dbReference type="GO" id="GO:0005829">
    <property type="term" value="C:cytosol"/>
    <property type="evidence" value="ECO:0007669"/>
    <property type="project" value="TreeGrafter"/>
</dbReference>
<dbReference type="GO" id="GO:0051539">
    <property type="term" value="F:4 iron, 4 sulfur cluster binding"/>
    <property type="evidence" value="ECO:0007669"/>
    <property type="project" value="UniProtKB-UniRule"/>
</dbReference>
<dbReference type="GO" id="GO:0046872">
    <property type="term" value="F:metal ion binding"/>
    <property type="evidence" value="ECO:0007669"/>
    <property type="project" value="UniProtKB-KW"/>
</dbReference>
<dbReference type="GO" id="GO:0035597">
    <property type="term" value="F:N6-isopentenyladenosine methylthiotransferase activity"/>
    <property type="evidence" value="ECO:0007669"/>
    <property type="project" value="TreeGrafter"/>
</dbReference>
<dbReference type="CDD" id="cd01335">
    <property type="entry name" value="Radical_SAM"/>
    <property type="match status" value="1"/>
</dbReference>
<dbReference type="FunFam" id="3.40.50.12160:FF:000001">
    <property type="entry name" value="tRNA-2-methylthio-N(6)-dimethylallyladenosine synthase"/>
    <property type="match status" value="1"/>
</dbReference>
<dbReference type="FunFam" id="3.80.30.20:FF:000001">
    <property type="entry name" value="tRNA-2-methylthio-N(6)-dimethylallyladenosine synthase 2"/>
    <property type="match status" value="1"/>
</dbReference>
<dbReference type="Gene3D" id="3.40.50.12160">
    <property type="entry name" value="Methylthiotransferase, N-terminal domain"/>
    <property type="match status" value="1"/>
</dbReference>
<dbReference type="Gene3D" id="3.80.30.20">
    <property type="entry name" value="tm_1862 like domain"/>
    <property type="match status" value="1"/>
</dbReference>
<dbReference type="HAMAP" id="MF_01864">
    <property type="entry name" value="tRNA_metthiotr_MiaB"/>
    <property type="match status" value="1"/>
</dbReference>
<dbReference type="InterPro" id="IPR006638">
    <property type="entry name" value="Elp3/MiaA/NifB-like_rSAM"/>
</dbReference>
<dbReference type="InterPro" id="IPR005839">
    <property type="entry name" value="Methylthiotransferase"/>
</dbReference>
<dbReference type="InterPro" id="IPR020612">
    <property type="entry name" value="Methylthiotransferase_CS"/>
</dbReference>
<dbReference type="InterPro" id="IPR013848">
    <property type="entry name" value="Methylthiotransferase_N"/>
</dbReference>
<dbReference type="InterPro" id="IPR038135">
    <property type="entry name" value="Methylthiotransferase_N_sf"/>
</dbReference>
<dbReference type="InterPro" id="IPR006463">
    <property type="entry name" value="MiaB_methiolase"/>
</dbReference>
<dbReference type="InterPro" id="IPR007197">
    <property type="entry name" value="rSAM"/>
</dbReference>
<dbReference type="InterPro" id="IPR023404">
    <property type="entry name" value="rSAM_horseshoe"/>
</dbReference>
<dbReference type="InterPro" id="IPR002792">
    <property type="entry name" value="TRAM_dom"/>
</dbReference>
<dbReference type="NCBIfam" id="TIGR01574">
    <property type="entry name" value="miaB-methiolase"/>
    <property type="match status" value="1"/>
</dbReference>
<dbReference type="NCBIfam" id="TIGR00089">
    <property type="entry name" value="MiaB/RimO family radical SAM methylthiotransferase"/>
    <property type="match status" value="1"/>
</dbReference>
<dbReference type="PANTHER" id="PTHR43020">
    <property type="entry name" value="CDK5 REGULATORY SUBUNIT-ASSOCIATED PROTEIN 1"/>
    <property type="match status" value="1"/>
</dbReference>
<dbReference type="PANTHER" id="PTHR43020:SF2">
    <property type="entry name" value="MITOCHONDRIAL TRNA METHYLTHIOTRANSFERASE CDK5RAP1"/>
    <property type="match status" value="1"/>
</dbReference>
<dbReference type="Pfam" id="PF04055">
    <property type="entry name" value="Radical_SAM"/>
    <property type="match status" value="1"/>
</dbReference>
<dbReference type="Pfam" id="PF01938">
    <property type="entry name" value="TRAM"/>
    <property type="match status" value="1"/>
</dbReference>
<dbReference type="Pfam" id="PF00919">
    <property type="entry name" value="UPF0004"/>
    <property type="match status" value="1"/>
</dbReference>
<dbReference type="SFLD" id="SFLDF00273">
    <property type="entry name" value="(dimethylallyl)adenosine_tRNA"/>
    <property type="match status" value="1"/>
</dbReference>
<dbReference type="SFLD" id="SFLDG01082">
    <property type="entry name" value="B12-binding_domain_containing"/>
    <property type="match status" value="1"/>
</dbReference>
<dbReference type="SFLD" id="SFLDS00029">
    <property type="entry name" value="Radical_SAM"/>
    <property type="match status" value="1"/>
</dbReference>
<dbReference type="SMART" id="SM00729">
    <property type="entry name" value="Elp3"/>
    <property type="match status" value="1"/>
</dbReference>
<dbReference type="SUPFAM" id="SSF102114">
    <property type="entry name" value="Radical SAM enzymes"/>
    <property type="match status" value="1"/>
</dbReference>
<dbReference type="PROSITE" id="PS51449">
    <property type="entry name" value="MTTASE_N"/>
    <property type="match status" value="1"/>
</dbReference>
<dbReference type="PROSITE" id="PS01278">
    <property type="entry name" value="MTTASE_RADICAL"/>
    <property type="match status" value="1"/>
</dbReference>
<dbReference type="PROSITE" id="PS51918">
    <property type="entry name" value="RADICAL_SAM"/>
    <property type="match status" value="1"/>
</dbReference>
<dbReference type="PROSITE" id="PS50926">
    <property type="entry name" value="TRAM"/>
    <property type="match status" value="1"/>
</dbReference>
<protein>
    <recommendedName>
        <fullName evidence="1">tRNA-2-methylthio-N(6)-dimethylallyladenosine synthase</fullName>
        <ecNumber evidence="1">2.8.4.3</ecNumber>
    </recommendedName>
    <alternativeName>
        <fullName evidence="1">(Dimethylallyl)adenosine tRNA methylthiotransferase MiaB</fullName>
    </alternativeName>
    <alternativeName>
        <fullName evidence="1">tRNA-i(6)A37 methylthiotransferase</fullName>
    </alternativeName>
</protein>